<geneLocation type="chloroplast"/>
<dbReference type="EMBL" id="EF067921">
    <property type="protein sequence ID" value="ABK20813.1"/>
    <property type="molecule type" value="Genomic_DNA"/>
</dbReference>
<dbReference type="RefSeq" id="YP_874590.1">
    <property type="nucleotide sequence ID" value="NC_008589.1"/>
</dbReference>
<dbReference type="SMR" id="A0T0X8"/>
<dbReference type="STRING" id="35128.A0T0X8"/>
<dbReference type="GeneID" id="4524753"/>
<dbReference type="InParanoid" id="A0T0X8"/>
<dbReference type="GO" id="GO:0009507">
    <property type="term" value="C:chloroplast"/>
    <property type="evidence" value="ECO:0007669"/>
    <property type="project" value="UniProtKB-SubCell"/>
</dbReference>
<dbReference type="GO" id="GO:0015934">
    <property type="term" value="C:large ribosomal subunit"/>
    <property type="evidence" value="ECO:0000318"/>
    <property type="project" value="GO_Central"/>
</dbReference>
<dbReference type="GO" id="GO:0019843">
    <property type="term" value="F:rRNA binding"/>
    <property type="evidence" value="ECO:0007669"/>
    <property type="project" value="UniProtKB-UniRule"/>
</dbReference>
<dbReference type="GO" id="GO:0003735">
    <property type="term" value="F:structural constituent of ribosome"/>
    <property type="evidence" value="ECO:0000318"/>
    <property type="project" value="GO_Central"/>
</dbReference>
<dbReference type="GO" id="GO:0006412">
    <property type="term" value="P:translation"/>
    <property type="evidence" value="ECO:0000318"/>
    <property type="project" value="GO_Central"/>
</dbReference>
<dbReference type="CDD" id="cd00336">
    <property type="entry name" value="Ribosomal_L22"/>
    <property type="match status" value="1"/>
</dbReference>
<dbReference type="FunFam" id="3.90.470.10:FF:000004">
    <property type="entry name" value="50S ribosomal protein L22, chloroplastic"/>
    <property type="match status" value="1"/>
</dbReference>
<dbReference type="Gene3D" id="3.90.470.10">
    <property type="entry name" value="Ribosomal protein L22/L17"/>
    <property type="match status" value="1"/>
</dbReference>
<dbReference type="HAMAP" id="MF_01331_B">
    <property type="entry name" value="Ribosomal_uL22_B"/>
    <property type="match status" value="1"/>
</dbReference>
<dbReference type="InterPro" id="IPR001063">
    <property type="entry name" value="Ribosomal_uL22"/>
</dbReference>
<dbReference type="InterPro" id="IPR005727">
    <property type="entry name" value="Ribosomal_uL22_bac/chlpt-type"/>
</dbReference>
<dbReference type="InterPro" id="IPR047867">
    <property type="entry name" value="Ribosomal_uL22_bac/org-type"/>
</dbReference>
<dbReference type="InterPro" id="IPR018260">
    <property type="entry name" value="Ribosomal_uL22_CS"/>
</dbReference>
<dbReference type="InterPro" id="IPR036394">
    <property type="entry name" value="Ribosomal_uL22_sf"/>
</dbReference>
<dbReference type="NCBIfam" id="TIGR01044">
    <property type="entry name" value="rplV_bact"/>
    <property type="match status" value="1"/>
</dbReference>
<dbReference type="PANTHER" id="PTHR13501">
    <property type="entry name" value="CHLOROPLAST 50S RIBOSOMAL PROTEIN L22-RELATED"/>
    <property type="match status" value="1"/>
</dbReference>
<dbReference type="PANTHER" id="PTHR13501:SF10">
    <property type="entry name" value="LARGE RIBOSOMAL SUBUNIT PROTEIN UL22M"/>
    <property type="match status" value="1"/>
</dbReference>
<dbReference type="Pfam" id="PF00237">
    <property type="entry name" value="Ribosomal_L22"/>
    <property type="match status" value="1"/>
</dbReference>
<dbReference type="SUPFAM" id="SSF54843">
    <property type="entry name" value="Ribosomal protein L22"/>
    <property type="match status" value="1"/>
</dbReference>
<dbReference type="PROSITE" id="PS00464">
    <property type="entry name" value="RIBOSOMAL_L22"/>
    <property type="match status" value="1"/>
</dbReference>
<gene>
    <name type="primary">rpl22</name>
</gene>
<feature type="chain" id="PRO_0000276452" description="Large ribosomal subunit protein uL22c">
    <location>
        <begin position="1"/>
        <end position="115"/>
    </location>
</feature>
<accession>A0T0X8</accession>
<keyword id="KW-0150">Chloroplast</keyword>
<keyword id="KW-0934">Plastid</keyword>
<keyword id="KW-0687">Ribonucleoprotein</keyword>
<keyword id="KW-0689">Ribosomal protein</keyword>
<keyword id="KW-0694">RNA-binding</keyword>
<keyword id="KW-0699">rRNA-binding</keyword>
<sequence>MSNGQSVKAVAKYVRISPHKVRQVLDQIRGRSYQEALMILEFLPYDAGSPIWQVVHSVAANAKNNYNLDKKKLVISEIFADEGPKLKRIRPRAQGRAYKILKPTCHITVVVKSIS</sequence>
<comment type="function">
    <text evidence="1">This protein binds specifically to 23S rRNA.</text>
</comment>
<comment type="function">
    <text evidence="1">The globular domain of the protein is located near the polypeptide exit tunnel on the outside of the subunit, while an extended beta-hairpin is found that lines the wall of the exit tunnel in the center of the 70S ribosome.</text>
</comment>
<comment type="subunit">
    <text evidence="1">Part of the 50S ribosomal subunit.</text>
</comment>
<comment type="subcellular location">
    <subcellularLocation>
        <location>Plastid</location>
        <location>Chloroplast</location>
    </subcellularLocation>
</comment>
<comment type="similarity">
    <text evidence="2">Belongs to the universal ribosomal protein uL22 family.</text>
</comment>
<organism>
    <name type="scientific">Thalassiosira pseudonana</name>
    <name type="common">Marine diatom</name>
    <name type="synonym">Cyclotella nana</name>
    <dbReference type="NCBI Taxonomy" id="35128"/>
    <lineage>
        <taxon>Eukaryota</taxon>
        <taxon>Sar</taxon>
        <taxon>Stramenopiles</taxon>
        <taxon>Ochrophyta</taxon>
        <taxon>Bacillariophyta</taxon>
        <taxon>Coscinodiscophyceae</taxon>
        <taxon>Thalassiosirophycidae</taxon>
        <taxon>Thalassiosirales</taxon>
        <taxon>Thalassiosiraceae</taxon>
        <taxon>Thalassiosira</taxon>
    </lineage>
</organism>
<evidence type="ECO:0000250" key="1"/>
<evidence type="ECO:0000305" key="2"/>
<proteinExistence type="inferred from homology"/>
<name>RK22_THAPS</name>
<protein>
    <recommendedName>
        <fullName evidence="2">Large ribosomal subunit protein uL22c</fullName>
    </recommendedName>
    <alternativeName>
        <fullName>50S ribosomal protein L22, chloroplastic</fullName>
    </alternativeName>
</protein>
<reference key="1">
    <citation type="journal article" date="2007" name="Mol. Genet. Genomics">
        <title>Chloroplast genomes of the diatoms Phaeodactylum tricornutum and Thalassiosira pseudonana: comparison with other plastid genomes of the red lineage.</title>
        <authorList>
            <person name="Oudot-Le Secq M.-P."/>
            <person name="Grimwood J."/>
            <person name="Shapiro H."/>
            <person name="Armbrust E.V."/>
            <person name="Bowler C."/>
            <person name="Green B.R."/>
        </authorList>
    </citation>
    <scope>NUCLEOTIDE SEQUENCE [LARGE SCALE GENOMIC DNA]</scope>
    <source>
        <strain>CCMP1335 / NEPCC58 / CCAP 1085/12</strain>
    </source>
</reference>